<gene>
    <name evidence="1" type="primary">rpsT</name>
    <name type="ordered locus">LSL_0637</name>
</gene>
<protein>
    <recommendedName>
        <fullName evidence="1">Small ribosomal subunit protein bS20</fullName>
    </recommendedName>
    <alternativeName>
        <fullName evidence="2">30S ribosomal protein S20</fullName>
    </alternativeName>
</protein>
<comment type="function">
    <text evidence="1">Binds directly to 16S ribosomal RNA.</text>
</comment>
<comment type="similarity">
    <text evidence="1">Belongs to the bacterial ribosomal protein bS20 family.</text>
</comment>
<organism>
    <name type="scientific">Ligilactobacillus salivarius (strain UCC118)</name>
    <name type="common">Lactobacillus salivarius</name>
    <dbReference type="NCBI Taxonomy" id="362948"/>
    <lineage>
        <taxon>Bacteria</taxon>
        <taxon>Bacillati</taxon>
        <taxon>Bacillota</taxon>
        <taxon>Bacilli</taxon>
        <taxon>Lactobacillales</taxon>
        <taxon>Lactobacillaceae</taxon>
        <taxon>Ligilactobacillus</taxon>
    </lineage>
</organism>
<keyword id="KW-1185">Reference proteome</keyword>
<keyword id="KW-0687">Ribonucleoprotein</keyword>
<keyword id="KW-0689">Ribosomal protein</keyword>
<keyword id="KW-0694">RNA-binding</keyword>
<keyword id="KW-0699">rRNA-binding</keyword>
<feature type="chain" id="PRO_0000260123" description="Small ribosomal subunit protein bS20">
    <location>
        <begin position="1"/>
        <end position="84"/>
    </location>
</feature>
<dbReference type="EMBL" id="CP000233">
    <property type="protein sequence ID" value="ABD99447.1"/>
    <property type="molecule type" value="Genomic_DNA"/>
</dbReference>
<dbReference type="RefSeq" id="WP_003699999.1">
    <property type="nucleotide sequence ID" value="NC_007929.1"/>
</dbReference>
<dbReference type="RefSeq" id="YP_535530.1">
    <property type="nucleotide sequence ID" value="NC_007929.1"/>
</dbReference>
<dbReference type="SMR" id="Q1WU88"/>
<dbReference type="STRING" id="362948.LSL_0637"/>
<dbReference type="GeneID" id="89465429"/>
<dbReference type="KEGG" id="lsl:LSL_0637"/>
<dbReference type="PATRIC" id="fig|362948.14.peg.717"/>
<dbReference type="HOGENOM" id="CLU_160655_1_1_9"/>
<dbReference type="OrthoDB" id="9808392at2"/>
<dbReference type="Proteomes" id="UP000006559">
    <property type="component" value="Chromosome"/>
</dbReference>
<dbReference type="GO" id="GO:0005829">
    <property type="term" value="C:cytosol"/>
    <property type="evidence" value="ECO:0007669"/>
    <property type="project" value="TreeGrafter"/>
</dbReference>
<dbReference type="GO" id="GO:0015935">
    <property type="term" value="C:small ribosomal subunit"/>
    <property type="evidence" value="ECO:0007669"/>
    <property type="project" value="TreeGrafter"/>
</dbReference>
<dbReference type="GO" id="GO:0070181">
    <property type="term" value="F:small ribosomal subunit rRNA binding"/>
    <property type="evidence" value="ECO:0007669"/>
    <property type="project" value="TreeGrafter"/>
</dbReference>
<dbReference type="GO" id="GO:0003735">
    <property type="term" value="F:structural constituent of ribosome"/>
    <property type="evidence" value="ECO:0007669"/>
    <property type="project" value="InterPro"/>
</dbReference>
<dbReference type="GO" id="GO:0006412">
    <property type="term" value="P:translation"/>
    <property type="evidence" value="ECO:0007669"/>
    <property type="project" value="UniProtKB-UniRule"/>
</dbReference>
<dbReference type="FunFam" id="1.20.58.110:FF:000001">
    <property type="entry name" value="30S ribosomal protein S20"/>
    <property type="match status" value="1"/>
</dbReference>
<dbReference type="Gene3D" id="1.20.58.110">
    <property type="entry name" value="Ribosomal protein S20"/>
    <property type="match status" value="1"/>
</dbReference>
<dbReference type="HAMAP" id="MF_00500">
    <property type="entry name" value="Ribosomal_bS20"/>
    <property type="match status" value="1"/>
</dbReference>
<dbReference type="InterPro" id="IPR002583">
    <property type="entry name" value="Ribosomal_bS20"/>
</dbReference>
<dbReference type="InterPro" id="IPR036510">
    <property type="entry name" value="Ribosomal_bS20_sf"/>
</dbReference>
<dbReference type="NCBIfam" id="TIGR00029">
    <property type="entry name" value="S20"/>
    <property type="match status" value="1"/>
</dbReference>
<dbReference type="PANTHER" id="PTHR33398">
    <property type="entry name" value="30S RIBOSOMAL PROTEIN S20"/>
    <property type="match status" value="1"/>
</dbReference>
<dbReference type="PANTHER" id="PTHR33398:SF1">
    <property type="entry name" value="SMALL RIBOSOMAL SUBUNIT PROTEIN BS20C"/>
    <property type="match status" value="1"/>
</dbReference>
<dbReference type="Pfam" id="PF01649">
    <property type="entry name" value="Ribosomal_S20p"/>
    <property type="match status" value="1"/>
</dbReference>
<dbReference type="SUPFAM" id="SSF46992">
    <property type="entry name" value="Ribosomal protein S20"/>
    <property type="match status" value="1"/>
</dbReference>
<proteinExistence type="inferred from homology"/>
<accession>Q1WU88</accession>
<name>RS20_LIGS1</name>
<sequence length="84" mass="9132">MPIIKSAIKRVKTTEKANAKNSSQLSKMRTAVKKFEKAKTAGADNVEQLFNEAVSAIDKAQSKGLIKANKAARDKSRMAARLAK</sequence>
<reference key="1">
    <citation type="journal article" date="2006" name="Proc. Natl. Acad. Sci. U.S.A.">
        <title>Multireplicon genome architecture of Lactobacillus salivarius.</title>
        <authorList>
            <person name="Claesson M.J."/>
            <person name="Li Y."/>
            <person name="Leahy S."/>
            <person name="Canchaya C."/>
            <person name="van Pijkeren J.P."/>
            <person name="Cerdeno-Tarraga A.M."/>
            <person name="Parkhill J."/>
            <person name="Flynn S."/>
            <person name="O'Sullivan G.C."/>
            <person name="Collins J.K."/>
            <person name="Higgins D."/>
            <person name="Shanahan F."/>
            <person name="Fitzgerald G.F."/>
            <person name="van Sinderen D."/>
            <person name="O'Toole P.W."/>
        </authorList>
    </citation>
    <scope>NUCLEOTIDE SEQUENCE [LARGE SCALE GENOMIC DNA]</scope>
    <source>
        <strain>UCC118</strain>
    </source>
</reference>
<evidence type="ECO:0000255" key="1">
    <source>
        <dbReference type="HAMAP-Rule" id="MF_00500"/>
    </source>
</evidence>
<evidence type="ECO:0000305" key="2"/>